<evidence type="ECO:0000250" key="1">
    <source>
        <dbReference type="UniProtKB" id="P58854"/>
    </source>
</evidence>
<evidence type="ECO:0000256" key="2">
    <source>
        <dbReference type="SAM" id="MobiDB-lite"/>
    </source>
</evidence>
<evidence type="ECO:0000269" key="3">
    <source>
    </source>
</evidence>
<evidence type="ECO:0000269" key="4">
    <source>
    </source>
</evidence>
<evidence type="ECO:0000269" key="5">
    <source>
    </source>
</evidence>
<evidence type="ECO:0000269" key="6">
    <source>
    </source>
</evidence>
<evidence type="ECO:0000269" key="7">
    <source>
    </source>
</evidence>
<evidence type="ECO:0000269" key="8">
    <source>
    </source>
</evidence>
<evidence type="ECO:0000269" key="9">
    <source>
    </source>
</evidence>
<evidence type="ECO:0000303" key="10">
    <source>
    </source>
</evidence>
<evidence type="ECO:0000303" key="11">
    <source>
    </source>
</evidence>
<evidence type="ECO:0000303" key="12">
    <source ref="3"/>
</evidence>
<evidence type="ECO:0000305" key="13"/>
<evidence type="ECO:0007744" key="14">
    <source>
        <dbReference type="PDB" id="8Q62"/>
    </source>
</evidence>
<evidence type="ECO:0007744" key="15">
    <source>
        <dbReference type="PDB" id="8RX1"/>
    </source>
</evidence>
<evidence type="ECO:0007744" key="16">
    <source>
        <dbReference type="PDB" id="8VRD"/>
    </source>
</evidence>
<evidence type="ECO:0007744" key="17">
    <source>
        <dbReference type="PDB" id="8VRJ"/>
    </source>
</evidence>
<evidence type="ECO:0007744" key="18">
    <source>
        <dbReference type="PDB" id="8VRK"/>
    </source>
</evidence>
<evidence type="ECO:0007744" key="19">
    <source>
    </source>
</evidence>
<evidence type="ECO:0007744" key="20">
    <source>
    </source>
</evidence>
<dbReference type="EMBL" id="AF042378">
    <property type="protein sequence ID" value="AAC39727.1"/>
    <property type="molecule type" value="mRNA"/>
</dbReference>
<dbReference type="EMBL" id="AJ003061">
    <property type="protein sequence ID" value="CAA05832.1"/>
    <property type="molecule type" value="mRNA"/>
</dbReference>
<dbReference type="EMBL" id="AJ003062">
    <property type="protein sequence ID" value="CAA05833.1"/>
    <property type="molecule type" value="mRNA"/>
</dbReference>
<dbReference type="EMBL" id="BT009772">
    <property type="protein sequence ID" value="AAP88774.1"/>
    <property type="molecule type" value="mRNA"/>
</dbReference>
<dbReference type="EMBL" id="AK314785">
    <property type="protein sequence ID" value="BAG37319.1"/>
    <property type="molecule type" value="mRNA"/>
</dbReference>
<dbReference type="EMBL" id="AL139384">
    <property type="status" value="NOT_ANNOTATED_CDS"/>
    <property type="molecule type" value="Genomic_DNA"/>
</dbReference>
<dbReference type="EMBL" id="AL160033">
    <property type="status" value="NOT_ANNOTATED_CDS"/>
    <property type="molecule type" value="Genomic_DNA"/>
</dbReference>
<dbReference type="EMBL" id="CH471085">
    <property type="protein sequence ID" value="EAX09164.1"/>
    <property type="molecule type" value="Genomic_DNA"/>
</dbReference>
<dbReference type="EMBL" id="BC007763">
    <property type="protein sequence ID" value="AAH07763.1"/>
    <property type="molecule type" value="mRNA"/>
</dbReference>
<dbReference type="EMBL" id="BC013781">
    <property type="protein sequence ID" value="AAH13781.1"/>
    <property type="molecule type" value="mRNA"/>
</dbReference>
<dbReference type="EMBL" id="BC046634">
    <property type="protein sequence ID" value="AAH46634.1"/>
    <property type="molecule type" value="mRNA"/>
</dbReference>
<dbReference type="CCDS" id="CCDS66584.1">
    <molecule id="Q96CW5-2"/>
</dbReference>
<dbReference type="CCDS" id="CCDS9525.1">
    <molecule id="Q96CW5-1"/>
</dbReference>
<dbReference type="RefSeq" id="NP_001273206.1">
    <property type="nucleotide sequence ID" value="NM_001286277.1"/>
</dbReference>
<dbReference type="RefSeq" id="NP_001273207.1">
    <molecule id="Q96CW5-2"/>
    <property type="nucleotide sequence ID" value="NM_001286278.2"/>
</dbReference>
<dbReference type="RefSeq" id="NP_001273208.1">
    <property type="nucleotide sequence ID" value="NM_001286279.1"/>
</dbReference>
<dbReference type="RefSeq" id="NP_006313.1">
    <molecule id="Q96CW5-1"/>
    <property type="nucleotide sequence ID" value="NM_006322.6"/>
</dbReference>
<dbReference type="PDB" id="6V6B">
    <property type="method" value="EM"/>
    <property type="resolution" value="3.80 A"/>
    <property type="chains" value="B=1-907"/>
</dbReference>
<dbReference type="PDB" id="6V6S">
    <property type="method" value="EM"/>
    <property type="resolution" value="4.30 A"/>
    <property type="chains" value="B/D/F/H/T=1-907"/>
</dbReference>
<dbReference type="PDB" id="6X0U">
    <property type="method" value="EM"/>
    <property type="resolution" value="3.60 A"/>
    <property type="chains" value="B=1-907"/>
</dbReference>
<dbReference type="PDB" id="7AS4">
    <property type="method" value="EM"/>
    <property type="resolution" value="4.13 A"/>
    <property type="chains" value="3/B/D/F/H/N=1-907"/>
</dbReference>
<dbReference type="PDB" id="7QJ0">
    <property type="method" value="EM"/>
    <property type="resolution" value="5.32 A"/>
    <property type="chains" value="H/a=1-907"/>
</dbReference>
<dbReference type="PDB" id="7QJ1">
    <property type="method" value="EM"/>
    <property type="resolution" value="7.00 A"/>
    <property type="chains" value="H/a=1-907"/>
</dbReference>
<dbReference type="PDB" id="7QJ2">
    <property type="method" value="EM"/>
    <property type="resolution" value="8.60 A"/>
    <property type="chains" value="F/H/a/j=1-907"/>
</dbReference>
<dbReference type="PDB" id="7QJ3">
    <property type="method" value="EM"/>
    <property type="resolution" value="7.60 A"/>
    <property type="chains" value="H/N/a/n=1-907"/>
</dbReference>
<dbReference type="PDB" id="7QJ4">
    <property type="method" value="EM"/>
    <property type="resolution" value="9.00 A"/>
    <property type="chains" value="F/H/N/a/j/n=1-907"/>
</dbReference>
<dbReference type="PDB" id="7QJ5">
    <property type="method" value="EM"/>
    <property type="resolution" value="8.70 A"/>
    <property type="chains" value="B/D/F/H/N/a/f/h/j=1-907"/>
</dbReference>
<dbReference type="PDB" id="7QJ6">
    <property type="method" value="EM"/>
    <property type="resolution" value="7.80 A"/>
    <property type="chains" value="D/F/H/a/h/j=1-907"/>
</dbReference>
<dbReference type="PDB" id="7QJ7">
    <property type="method" value="EM"/>
    <property type="resolution" value="8.70 A"/>
    <property type="chains" value="B/D/F/H/a/f/h/j=1-907"/>
</dbReference>
<dbReference type="PDB" id="7QJ8">
    <property type="method" value="EM"/>
    <property type="resolution" value="8.70 A"/>
    <property type="chains" value="D/F/H/N/a/h/j=1-907"/>
</dbReference>
<dbReference type="PDB" id="7QJ9">
    <property type="method" value="EM"/>
    <property type="resolution" value="8.10 A"/>
    <property type="chains" value="D/F/H/a/h/j=1-907"/>
</dbReference>
<dbReference type="PDB" id="7QJA">
    <property type="method" value="EM"/>
    <property type="resolution" value="9.20 A"/>
    <property type="chains" value="B/D/F/H/a/f/h/j=1-907"/>
</dbReference>
<dbReference type="PDB" id="7QJB">
    <property type="method" value="EM"/>
    <property type="resolution" value="9.20 A"/>
    <property type="chains" value="D/F/H/N/a/h/j=1-907"/>
</dbReference>
<dbReference type="PDB" id="7QJC">
    <property type="method" value="EM"/>
    <property type="resolution" value="16.10 A"/>
    <property type="chains" value="B/D/F/H/N/a/f/h/j=1-907"/>
</dbReference>
<dbReference type="PDB" id="7QJD">
    <property type="method" value="EM"/>
    <property type="resolution" value="7.10 A"/>
    <property type="chains" value="B/D/F/H/N/a/f/h/j/n=1-907"/>
</dbReference>
<dbReference type="PDB" id="8Q62">
    <property type="method" value="EM"/>
    <property type="resolution" value="3.72 A"/>
    <property type="chains" value="B/D/F/H/N=1-907"/>
</dbReference>
<dbReference type="PDB" id="8RX1">
    <property type="method" value="EM"/>
    <property type="resolution" value="3.57 A"/>
    <property type="chains" value="B/D/F/N/b/n=1-907"/>
</dbReference>
<dbReference type="PDB" id="8VRD">
    <property type="method" value="EM"/>
    <property type="resolution" value="7.00 A"/>
    <property type="chains" value="B/D/F/H/N/O=1-907"/>
</dbReference>
<dbReference type="PDB" id="8VRJ">
    <property type="method" value="EM"/>
    <property type="resolution" value="7.70 A"/>
    <property type="chains" value="5/B/D/F/H/N=1-907"/>
</dbReference>
<dbReference type="PDB" id="8VRK">
    <property type="method" value="EM"/>
    <property type="resolution" value="8.50 A"/>
    <property type="chains" value="5/B/D/F/H/N=1-907"/>
</dbReference>
<dbReference type="PDBsum" id="6V6B"/>
<dbReference type="PDBsum" id="6V6S"/>
<dbReference type="PDBsum" id="6X0U"/>
<dbReference type="PDBsum" id="7AS4"/>
<dbReference type="PDBsum" id="7QJ0"/>
<dbReference type="PDBsum" id="7QJ1"/>
<dbReference type="PDBsum" id="7QJ2"/>
<dbReference type="PDBsum" id="7QJ3"/>
<dbReference type="PDBsum" id="7QJ4"/>
<dbReference type="PDBsum" id="7QJ5"/>
<dbReference type="PDBsum" id="7QJ6"/>
<dbReference type="PDBsum" id="7QJ7"/>
<dbReference type="PDBsum" id="7QJ8"/>
<dbReference type="PDBsum" id="7QJ9"/>
<dbReference type="PDBsum" id="7QJA"/>
<dbReference type="PDBsum" id="7QJB"/>
<dbReference type="PDBsum" id="7QJC"/>
<dbReference type="PDBsum" id="7QJD"/>
<dbReference type="PDBsum" id="8Q62"/>
<dbReference type="PDBsum" id="8RX1"/>
<dbReference type="PDBsum" id="8VRD"/>
<dbReference type="PDBsum" id="8VRJ"/>
<dbReference type="PDBsum" id="8VRK"/>
<dbReference type="EMDB" id="EMD-11888"/>
<dbReference type="EMDB" id="EMD-14005"/>
<dbReference type="EMDB" id="EMD-14006"/>
<dbReference type="EMDB" id="EMD-14007"/>
<dbReference type="EMDB" id="EMD-14008"/>
<dbReference type="EMDB" id="EMD-14009"/>
<dbReference type="EMDB" id="EMD-14010"/>
<dbReference type="EMDB" id="EMD-14011"/>
<dbReference type="EMDB" id="EMD-14012"/>
<dbReference type="EMDB" id="EMD-14013"/>
<dbReference type="EMDB" id="EMD-14014"/>
<dbReference type="EMDB" id="EMD-14015"/>
<dbReference type="EMDB" id="EMD-14016"/>
<dbReference type="EMDB" id="EMD-14017"/>
<dbReference type="EMDB" id="EMD-14018"/>
<dbReference type="EMDB" id="EMD-18181"/>
<dbReference type="EMDB" id="EMD-18182"/>
<dbReference type="EMDB" id="EMD-18193"/>
<dbReference type="EMDB" id="EMD-19570"/>
<dbReference type="EMDB" id="EMD-21067"/>
<dbReference type="EMDB" id="EMD-21073"/>
<dbReference type="EMDB" id="EMD-21984"/>
<dbReference type="EMDB" id="EMD-43481"/>
<dbReference type="EMDB" id="EMD-43482"/>
<dbReference type="EMDB" id="EMD-43483"/>
<dbReference type="SMR" id="Q96CW5"/>
<dbReference type="BioGRID" id="115695">
    <property type="interactions" value="254"/>
</dbReference>
<dbReference type="CORUM" id="Q96CW5"/>
<dbReference type="FunCoup" id="Q96CW5">
    <property type="interactions" value="3949"/>
</dbReference>
<dbReference type="IntAct" id="Q96CW5">
    <property type="interactions" value="103"/>
</dbReference>
<dbReference type="MINT" id="Q96CW5"/>
<dbReference type="STRING" id="9606.ENSP00000261965"/>
<dbReference type="GlyCosmos" id="Q96CW5">
    <property type="glycosylation" value="3 sites, 1 glycan"/>
</dbReference>
<dbReference type="GlyGen" id="Q96CW5">
    <property type="glycosylation" value="3 sites, 1 O-linked glycan (3 sites)"/>
</dbReference>
<dbReference type="iPTMnet" id="Q96CW5"/>
<dbReference type="MetOSite" id="Q96CW5"/>
<dbReference type="PhosphoSitePlus" id="Q96CW5"/>
<dbReference type="SwissPalm" id="Q96CW5"/>
<dbReference type="BioMuta" id="TUBGCP3"/>
<dbReference type="DMDM" id="21362575"/>
<dbReference type="jPOST" id="Q96CW5"/>
<dbReference type="MassIVE" id="Q96CW5"/>
<dbReference type="PaxDb" id="9606-ENSP00000261965"/>
<dbReference type="PeptideAtlas" id="Q96CW5"/>
<dbReference type="ProteomicsDB" id="76231">
    <molecule id="Q96CW5-1"/>
</dbReference>
<dbReference type="ProteomicsDB" id="76232">
    <molecule id="Q96CW5-2"/>
</dbReference>
<dbReference type="ProteomicsDB" id="76233">
    <molecule id="Q96CW5-3"/>
</dbReference>
<dbReference type="Pumba" id="Q96CW5"/>
<dbReference type="Antibodypedia" id="25680">
    <property type="antibodies" value="217 antibodies from 30 providers"/>
</dbReference>
<dbReference type="DNASU" id="10426"/>
<dbReference type="Ensembl" id="ENST00000261965.8">
    <molecule id="Q96CW5-1"/>
    <property type="protein sequence ID" value="ENSP00000261965.3"/>
    <property type="gene ID" value="ENSG00000126216.15"/>
</dbReference>
<dbReference type="Ensembl" id="ENST00000375669.7">
    <molecule id="Q96CW5-2"/>
    <property type="protein sequence ID" value="ENSP00000364821.3"/>
    <property type="gene ID" value="ENSG00000126216.15"/>
</dbReference>
<dbReference type="GeneID" id="10426"/>
<dbReference type="KEGG" id="hsa:10426"/>
<dbReference type="MANE-Select" id="ENST00000261965.8">
    <property type="protein sequence ID" value="ENSP00000261965.3"/>
    <property type="RefSeq nucleotide sequence ID" value="NM_006322.6"/>
    <property type="RefSeq protein sequence ID" value="NP_006313.1"/>
</dbReference>
<dbReference type="UCSC" id="uc001vse.3">
    <molecule id="Q96CW5-1"/>
    <property type="organism name" value="human"/>
</dbReference>
<dbReference type="AGR" id="HGNC:18598"/>
<dbReference type="CTD" id="10426"/>
<dbReference type="DisGeNET" id="10426"/>
<dbReference type="GeneCards" id="TUBGCP3"/>
<dbReference type="HGNC" id="HGNC:18598">
    <property type="gene designation" value="TUBGCP3"/>
</dbReference>
<dbReference type="HPA" id="ENSG00000126216">
    <property type="expression patterns" value="Low tissue specificity"/>
</dbReference>
<dbReference type="MIM" id="617818">
    <property type="type" value="gene"/>
</dbReference>
<dbReference type="neXtProt" id="NX_Q96CW5"/>
<dbReference type="OpenTargets" id="ENSG00000126216"/>
<dbReference type="PharmGKB" id="PA38597"/>
<dbReference type="VEuPathDB" id="HostDB:ENSG00000126216"/>
<dbReference type="eggNOG" id="KOG2000">
    <property type="taxonomic scope" value="Eukaryota"/>
</dbReference>
<dbReference type="GeneTree" id="ENSGT00940000157872"/>
<dbReference type="HOGENOM" id="CLU_003736_5_0_1"/>
<dbReference type="InParanoid" id="Q96CW5"/>
<dbReference type="OMA" id="MRMMSVC"/>
<dbReference type="OrthoDB" id="5860513at2759"/>
<dbReference type="PAN-GO" id="Q96CW5">
    <property type="GO annotations" value="10 GO annotations based on evolutionary models"/>
</dbReference>
<dbReference type="PhylomeDB" id="Q96CW5"/>
<dbReference type="TreeFam" id="TF300705"/>
<dbReference type="PathwayCommons" id="Q96CW5"/>
<dbReference type="Reactome" id="R-HSA-380270">
    <property type="pathway name" value="Recruitment of mitotic centrosome proteins and complexes"/>
</dbReference>
<dbReference type="Reactome" id="R-HSA-380320">
    <property type="pathway name" value="Recruitment of NuMA to mitotic centrosomes"/>
</dbReference>
<dbReference type="SignaLink" id="Q96CW5"/>
<dbReference type="SIGNOR" id="Q96CW5"/>
<dbReference type="BioGRID-ORCS" id="10426">
    <property type="hits" value="790 hits in 1179 CRISPR screens"/>
</dbReference>
<dbReference type="CD-CODE" id="232F8A39">
    <property type="entry name" value="P-body"/>
</dbReference>
<dbReference type="CD-CODE" id="8C2F96ED">
    <property type="entry name" value="Centrosome"/>
</dbReference>
<dbReference type="ChiTaRS" id="TUBGCP3">
    <property type="organism name" value="human"/>
</dbReference>
<dbReference type="GeneWiki" id="TUBGCP3"/>
<dbReference type="GenomeRNAi" id="10426"/>
<dbReference type="Pharos" id="Q96CW5">
    <property type="development level" value="Tbio"/>
</dbReference>
<dbReference type="PRO" id="PR:Q96CW5"/>
<dbReference type="Proteomes" id="UP000005640">
    <property type="component" value="Chromosome 13"/>
</dbReference>
<dbReference type="RNAct" id="Q96CW5">
    <property type="molecule type" value="protein"/>
</dbReference>
<dbReference type="Bgee" id="ENSG00000126216">
    <property type="expression patterns" value="Expressed in monocyte and 99 other cell types or tissues"/>
</dbReference>
<dbReference type="ExpressionAtlas" id="Q96CW5">
    <property type="expression patterns" value="baseline and differential"/>
</dbReference>
<dbReference type="GO" id="GO:0005814">
    <property type="term" value="C:centriole"/>
    <property type="evidence" value="ECO:0000314"/>
    <property type="project" value="UniProtKB"/>
</dbReference>
<dbReference type="GO" id="GO:0005813">
    <property type="term" value="C:centrosome"/>
    <property type="evidence" value="ECO:0000314"/>
    <property type="project" value="UniProtKB"/>
</dbReference>
<dbReference type="GO" id="GO:0005737">
    <property type="term" value="C:cytoplasm"/>
    <property type="evidence" value="ECO:0000314"/>
    <property type="project" value="UniProtKB"/>
</dbReference>
<dbReference type="GO" id="GO:0005829">
    <property type="term" value="C:cytosol"/>
    <property type="evidence" value="ECO:0000304"/>
    <property type="project" value="Reactome"/>
</dbReference>
<dbReference type="GO" id="GO:0000930">
    <property type="term" value="C:gamma-tubulin complex"/>
    <property type="evidence" value="ECO:0000318"/>
    <property type="project" value="GO_Central"/>
</dbReference>
<dbReference type="GO" id="GO:0016020">
    <property type="term" value="C:membrane"/>
    <property type="evidence" value="ECO:0007005"/>
    <property type="project" value="UniProtKB"/>
</dbReference>
<dbReference type="GO" id="GO:0005827">
    <property type="term" value="C:polar microtubule"/>
    <property type="evidence" value="ECO:0000314"/>
    <property type="project" value="UniProtKB"/>
</dbReference>
<dbReference type="GO" id="GO:0005819">
    <property type="term" value="C:spindle"/>
    <property type="evidence" value="ECO:0000303"/>
    <property type="project" value="UniProtKB"/>
</dbReference>
<dbReference type="GO" id="GO:0043015">
    <property type="term" value="F:gamma-tubulin binding"/>
    <property type="evidence" value="ECO:0000314"/>
    <property type="project" value="UniProtKB"/>
</dbReference>
<dbReference type="GO" id="GO:0005200">
    <property type="term" value="F:structural constituent of cytoskeleton"/>
    <property type="evidence" value="ECO:0000303"/>
    <property type="project" value="UniProtKB"/>
</dbReference>
<dbReference type="GO" id="GO:0005198">
    <property type="term" value="F:structural molecule activity"/>
    <property type="evidence" value="ECO:0000303"/>
    <property type="project" value="ProtInc"/>
</dbReference>
<dbReference type="GO" id="GO:0031122">
    <property type="term" value="P:cytoplasmic microtubule organization"/>
    <property type="evidence" value="ECO:0000318"/>
    <property type="project" value="GO_Central"/>
</dbReference>
<dbReference type="GO" id="GO:0051321">
    <property type="term" value="P:meiotic cell cycle"/>
    <property type="evidence" value="ECO:0000318"/>
    <property type="project" value="GO_Central"/>
</dbReference>
<dbReference type="GO" id="GO:0007020">
    <property type="term" value="P:microtubule nucleation"/>
    <property type="evidence" value="ECO:0000318"/>
    <property type="project" value="GO_Central"/>
</dbReference>
<dbReference type="GO" id="GO:0000278">
    <property type="term" value="P:mitotic cell cycle"/>
    <property type="evidence" value="ECO:0000318"/>
    <property type="project" value="GO_Central"/>
</dbReference>
<dbReference type="GO" id="GO:0007338">
    <property type="term" value="P:single fertilization"/>
    <property type="evidence" value="ECO:0000303"/>
    <property type="project" value="UniProtKB"/>
</dbReference>
<dbReference type="GO" id="GO:0051225">
    <property type="term" value="P:spindle assembly"/>
    <property type="evidence" value="ECO:0000318"/>
    <property type="project" value="GO_Central"/>
</dbReference>
<dbReference type="Gene3D" id="1.20.120.1900">
    <property type="entry name" value="Gamma-tubulin complex, C-terminal domain"/>
    <property type="match status" value="1"/>
</dbReference>
<dbReference type="InterPro" id="IPR007259">
    <property type="entry name" value="GCP"/>
</dbReference>
<dbReference type="InterPro" id="IPR040457">
    <property type="entry name" value="GCP_C"/>
</dbReference>
<dbReference type="InterPro" id="IPR042241">
    <property type="entry name" value="GCP_C_sf"/>
</dbReference>
<dbReference type="InterPro" id="IPR041470">
    <property type="entry name" value="GCP_N"/>
</dbReference>
<dbReference type="PANTHER" id="PTHR19302">
    <property type="entry name" value="GAMMA TUBULIN COMPLEX PROTEIN"/>
    <property type="match status" value="1"/>
</dbReference>
<dbReference type="PANTHER" id="PTHR19302:SF14">
    <property type="entry name" value="GAMMA-TUBULIN COMPLEX COMPONENT 3"/>
    <property type="match status" value="1"/>
</dbReference>
<dbReference type="Pfam" id="PF04130">
    <property type="entry name" value="GCP_C_terminal"/>
    <property type="match status" value="1"/>
</dbReference>
<dbReference type="Pfam" id="PF17681">
    <property type="entry name" value="GCP_N_terminal"/>
    <property type="match status" value="1"/>
</dbReference>
<gene>
    <name type="primary">TUBGCP3</name>
    <name type="synonym">GCP3</name>
</gene>
<protein>
    <recommendedName>
        <fullName>Gamma-tubulin complex component 3</fullName>
        <shortName>GCP-3</shortName>
        <shortName>hGCP3</shortName>
    </recommendedName>
    <alternativeName>
        <fullName>Gamma-ring complex protein 104 kDa</fullName>
        <shortName>h104p</shortName>
        <shortName>hGrip104</shortName>
    </alternativeName>
    <alternativeName>
        <fullName>Spindle pole body protein Spc98 homolog</fullName>
        <shortName>hSpc98</shortName>
    </alternativeName>
</protein>
<reference key="1">
    <citation type="journal article" date="1998" name="J. Cell Biol.">
        <title>The mammalian gamma-tubulin complex contains homologues of the yeast spindle pole body components spc97p and spc98p.</title>
        <authorList>
            <person name="Murphy S.M."/>
            <person name="Urbani L."/>
            <person name="Stearns T."/>
        </authorList>
    </citation>
    <scope>NUCLEOTIDE SEQUENCE [MRNA] (ISOFORM 1)</scope>
    <source>
        <tissue>Cervix carcinoma</tissue>
    </source>
</reference>
<reference key="2">
    <citation type="journal article" date="1998" name="J. Cell Biol.">
        <title>Characterization of the human homologue of the yeast spc98p and its association with gamma-tubulin.</title>
        <authorList>
            <person name="Tassin A.-M."/>
            <person name="Celati C."/>
            <person name="Moudjou M."/>
            <person name="Bornens M."/>
        </authorList>
    </citation>
    <scope>NUCLEOTIDE SEQUENCE [MRNA] (ISOFORMS 1 AND 2)</scope>
    <scope>CHARACTERIZATION</scope>
    <scope>VARIANT SER-208</scope>
</reference>
<reference key="3">
    <citation type="submission" date="2003-08" db="EMBL/GenBank/DDBJ databases">
        <title>Cloning of human full-length CDSs in BD Creator(TM) system donor vector.</title>
        <authorList>
            <person name="Kalnine N."/>
            <person name="Chen X."/>
            <person name="Rolfs A."/>
            <person name="Halleck A."/>
            <person name="Hines L."/>
            <person name="Eisenstein S."/>
            <person name="Koundinya M."/>
            <person name="Raphael J."/>
            <person name="Moreira D."/>
            <person name="Kelley T."/>
            <person name="LaBaer J."/>
            <person name="Lin Y."/>
            <person name="Phelan M."/>
            <person name="Farmer A."/>
        </authorList>
    </citation>
    <scope>NUCLEOTIDE SEQUENCE [LARGE SCALE MRNA] (ISOFORM 2)</scope>
</reference>
<reference key="4">
    <citation type="journal article" date="2004" name="Nat. Genet.">
        <title>Complete sequencing and characterization of 21,243 full-length human cDNAs.</title>
        <authorList>
            <person name="Ota T."/>
            <person name="Suzuki Y."/>
            <person name="Nishikawa T."/>
            <person name="Otsuki T."/>
            <person name="Sugiyama T."/>
            <person name="Irie R."/>
            <person name="Wakamatsu A."/>
            <person name="Hayashi K."/>
            <person name="Sato H."/>
            <person name="Nagai K."/>
            <person name="Kimura K."/>
            <person name="Makita H."/>
            <person name="Sekine M."/>
            <person name="Obayashi M."/>
            <person name="Nishi T."/>
            <person name="Shibahara T."/>
            <person name="Tanaka T."/>
            <person name="Ishii S."/>
            <person name="Yamamoto J."/>
            <person name="Saito K."/>
            <person name="Kawai Y."/>
            <person name="Isono Y."/>
            <person name="Nakamura Y."/>
            <person name="Nagahari K."/>
            <person name="Murakami K."/>
            <person name="Yasuda T."/>
            <person name="Iwayanagi T."/>
            <person name="Wagatsuma M."/>
            <person name="Shiratori A."/>
            <person name="Sudo H."/>
            <person name="Hosoiri T."/>
            <person name="Kaku Y."/>
            <person name="Kodaira H."/>
            <person name="Kondo H."/>
            <person name="Sugawara M."/>
            <person name="Takahashi M."/>
            <person name="Kanda K."/>
            <person name="Yokoi T."/>
            <person name="Furuya T."/>
            <person name="Kikkawa E."/>
            <person name="Omura Y."/>
            <person name="Abe K."/>
            <person name="Kamihara K."/>
            <person name="Katsuta N."/>
            <person name="Sato K."/>
            <person name="Tanikawa M."/>
            <person name="Yamazaki M."/>
            <person name="Ninomiya K."/>
            <person name="Ishibashi T."/>
            <person name="Yamashita H."/>
            <person name="Murakawa K."/>
            <person name="Fujimori K."/>
            <person name="Tanai H."/>
            <person name="Kimata M."/>
            <person name="Watanabe M."/>
            <person name="Hiraoka S."/>
            <person name="Chiba Y."/>
            <person name="Ishida S."/>
            <person name="Ono Y."/>
            <person name="Takiguchi S."/>
            <person name="Watanabe S."/>
            <person name="Yosida M."/>
            <person name="Hotuta T."/>
            <person name="Kusano J."/>
            <person name="Kanehori K."/>
            <person name="Takahashi-Fujii A."/>
            <person name="Hara H."/>
            <person name="Tanase T.-O."/>
            <person name="Nomura Y."/>
            <person name="Togiya S."/>
            <person name="Komai F."/>
            <person name="Hara R."/>
            <person name="Takeuchi K."/>
            <person name="Arita M."/>
            <person name="Imose N."/>
            <person name="Musashino K."/>
            <person name="Yuuki H."/>
            <person name="Oshima A."/>
            <person name="Sasaki N."/>
            <person name="Aotsuka S."/>
            <person name="Yoshikawa Y."/>
            <person name="Matsunawa H."/>
            <person name="Ichihara T."/>
            <person name="Shiohata N."/>
            <person name="Sano S."/>
            <person name="Moriya S."/>
            <person name="Momiyama H."/>
            <person name="Satoh N."/>
            <person name="Takami S."/>
            <person name="Terashima Y."/>
            <person name="Suzuki O."/>
            <person name="Nakagawa S."/>
            <person name="Senoh A."/>
            <person name="Mizoguchi H."/>
            <person name="Goto Y."/>
            <person name="Shimizu F."/>
            <person name="Wakebe H."/>
            <person name="Hishigaki H."/>
            <person name="Watanabe T."/>
            <person name="Sugiyama A."/>
            <person name="Takemoto M."/>
            <person name="Kawakami B."/>
            <person name="Yamazaki M."/>
            <person name="Watanabe K."/>
            <person name="Kumagai A."/>
            <person name="Itakura S."/>
            <person name="Fukuzumi Y."/>
            <person name="Fujimori Y."/>
            <person name="Komiyama M."/>
            <person name="Tashiro H."/>
            <person name="Tanigami A."/>
            <person name="Fujiwara T."/>
            <person name="Ono T."/>
            <person name="Yamada K."/>
            <person name="Fujii Y."/>
            <person name="Ozaki K."/>
            <person name="Hirao M."/>
            <person name="Ohmori Y."/>
            <person name="Kawabata A."/>
            <person name="Hikiji T."/>
            <person name="Kobatake N."/>
            <person name="Inagaki H."/>
            <person name="Ikema Y."/>
            <person name="Okamoto S."/>
            <person name="Okitani R."/>
            <person name="Kawakami T."/>
            <person name="Noguchi S."/>
            <person name="Itoh T."/>
            <person name="Shigeta K."/>
            <person name="Senba T."/>
            <person name="Matsumura K."/>
            <person name="Nakajima Y."/>
            <person name="Mizuno T."/>
            <person name="Morinaga M."/>
            <person name="Sasaki M."/>
            <person name="Togashi T."/>
            <person name="Oyama M."/>
            <person name="Hata H."/>
            <person name="Watanabe M."/>
            <person name="Komatsu T."/>
            <person name="Mizushima-Sugano J."/>
            <person name="Satoh T."/>
            <person name="Shirai Y."/>
            <person name="Takahashi Y."/>
            <person name="Nakagawa K."/>
            <person name="Okumura K."/>
            <person name="Nagase T."/>
            <person name="Nomura N."/>
            <person name="Kikuchi H."/>
            <person name="Masuho Y."/>
            <person name="Yamashita R."/>
            <person name="Nakai K."/>
            <person name="Yada T."/>
            <person name="Nakamura Y."/>
            <person name="Ohara O."/>
            <person name="Isogai T."/>
            <person name="Sugano S."/>
        </authorList>
    </citation>
    <scope>NUCLEOTIDE SEQUENCE [LARGE SCALE MRNA]</scope>
    <source>
        <tissue>Thalamus</tissue>
    </source>
</reference>
<reference key="5">
    <citation type="journal article" date="2004" name="Nature">
        <title>The DNA sequence and analysis of human chromosome 13.</title>
        <authorList>
            <person name="Dunham A."/>
            <person name="Matthews L.H."/>
            <person name="Burton J."/>
            <person name="Ashurst J.L."/>
            <person name="Howe K.L."/>
            <person name="Ashcroft K.J."/>
            <person name="Beare D.M."/>
            <person name="Burford D.C."/>
            <person name="Hunt S.E."/>
            <person name="Griffiths-Jones S."/>
            <person name="Jones M.C."/>
            <person name="Keenan S.J."/>
            <person name="Oliver K."/>
            <person name="Scott C.E."/>
            <person name="Ainscough R."/>
            <person name="Almeida J.P."/>
            <person name="Ambrose K.D."/>
            <person name="Andrews D.T."/>
            <person name="Ashwell R.I.S."/>
            <person name="Babbage A.K."/>
            <person name="Bagguley C.L."/>
            <person name="Bailey J."/>
            <person name="Bannerjee R."/>
            <person name="Barlow K.F."/>
            <person name="Bates K."/>
            <person name="Beasley H."/>
            <person name="Bird C.P."/>
            <person name="Bray-Allen S."/>
            <person name="Brown A.J."/>
            <person name="Brown J.Y."/>
            <person name="Burrill W."/>
            <person name="Carder C."/>
            <person name="Carter N.P."/>
            <person name="Chapman J.C."/>
            <person name="Clamp M.E."/>
            <person name="Clark S.Y."/>
            <person name="Clarke G."/>
            <person name="Clee C.M."/>
            <person name="Clegg S.C."/>
            <person name="Cobley V."/>
            <person name="Collins J.E."/>
            <person name="Corby N."/>
            <person name="Coville G.J."/>
            <person name="Deloukas P."/>
            <person name="Dhami P."/>
            <person name="Dunham I."/>
            <person name="Dunn M."/>
            <person name="Earthrowl M.E."/>
            <person name="Ellington A.G."/>
            <person name="Faulkner L."/>
            <person name="Frankish A.G."/>
            <person name="Frankland J."/>
            <person name="French L."/>
            <person name="Garner P."/>
            <person name="Garnett J."/>
            <person name="Gilbert J.G.R."/>
            <person name="Gilson C.J."/>
            <person name="Ghori J."/>
            <person name="Grafham D.V."/>
            <person name="Gribble S.M."/>
            <person name="Griffiths C."/>
            <person name="Hall R.E."/>
            <person name="Hammond S."/>
            <person name="Harley J.L."/>
            <person name="Hart E.A."/>
            <person name="Heath P.D."/>
            <person name="Howden P.J."/>
            <person name="Huckle E.J."/>
            <person name="Hunt P.J."/>
            <person name="Hunt A.R."/>
            <person name="Johnson C."/>
            <person name="Johnson D."/>
            <person name="Kay M."/>
            <person name="Kimberley A.M."/>
            <person name="King A."/>
            <person name="Laird G.K."/>
            <person name="Langford C.J."/>
            <person name="Lawlor S."/>
            <person name="Leongamornlert D.A."/>
            <person name="Lloyd D.M."/>
            <person name="Lloyd C."/>
            <person name="Loveland J.E."/>
            <person name="Lovell J."/>
            <person name="Martin S."/>
            <person name="Mashreghi-Mohammadi M."/>
            <person name="McLaren S.J."/>
            <person name="McMurray A."/>
            <person name="Milne S."/>
            <person name="Moore M.J.F."/>
            <person name="Nickerson T."/>
            <person name="Palmer S.A."/>
            <person name="Pearce A.V."/>
            <person name="Peck A.I."/>
            <person name="Pelan S."/>
            <person name="Phillimore B."/>
            <person name="Porter K.M."/>
            <person name="Rice C.M."/>
            <person name="Searle S."/>
            <person name="Sehra H.K."/>
            <person name="Shownkeen R."/>
            <person name="Skuce C.D."/>
            <person name="Smith M."/>
            <person name="Steward C.A."/>
            <person name="Sycamore N."/>
            <person name="Tester J."/>
            <person name="Thomas D.W."/>
            <person name="Tracey A."/>
            <person name="Tromans A."/>
            <person name="Tubby B."/>
            <person name="Wall M."/>
            <person name="Wallis J.M."/>
            <person name="West A.P."/>
            <person name="Whitehead S.L."/>
            <person name="Willey D.L."/>
            <person name="Wilming L."/>
            <person name="Wray P.W."/>
            <person name="Wright M.W."/>
            <person name="Young L."/>
            <person name="Coulson A."/>
            <person name="Durbin R.M."/>
            <person name="Hubbard T."/>
            <person name="Sulston J.E."/>
            <person name="Beck S."/>
            <person name="Bentley D.R."/>
            <person name="Rogers J."/>
            <person name="Ross M.T."/>
        </authorList>
    </citation>
    <scope>NUCLEOTIDE SEQUENCE [LARGE SCALE GENOMIC DNA]</scope>
</reference>
<reference key="6">
    <citation type="submission" date="2005-07" db="EMBL/GenBank/DDBJ databases">
        <authorList>
            <person name="Mural R.J."/>
            <person name="Istrail S."/>
            <person name="Sutton G."/>
            <person name="Florea L."/>
            <person name="Halpern A.L."/>
            <person name="Mobarry C.M."/>
            <person name="Lippert R."/>
            <person name="Walenz B."/>
            <person name="Shatkay H."/>
            <person name="Dew I."/>
            <person name="Miller J.R."/>
            <person name="Flanigan M.J."/>
            <person name="Edwards N.J."/>
            <person name="Bolanos R."/>
            <person name="Fasulo D."/>
            <person name="Halldorsson B.V."/>
            <person name="Hannenhalli S."/>
            <person name="Turner R."/>
            <person name="Yooseph S."/>
            <person name="Lu F."/>
            <person name="Nusskern D.R."/>
            <person name="Shue B.C."/>
            <person name="Zheng X.H."/>
            <person name="Zhong F."/>
            <person name="Delcher A.L."/>
            <person name="Huson D.H."/>
            <person name="Kravitz S.A."/>
            <person name="Mouchard L."/>
            <person name="Reinert K."/>
            <person name="Remington K.A."/>
            <person name="Clark A.G."/>
            <person name="Waterman M.S."/>
            <person name="Eichler E.E."/>
            <person name="Adams M.D."/>
            <person name="Hunkapiller M.W."/>
            <person name="Myers E.W."/>
            <person name="Venter J.C."/>
        </authorList>
    </citation>
    <scope>NUCLEOTIDE SEQUENCE [LARGE SCALE GENOMIC DNA]</scope>
</reference>
<reference key="7">
    <citation type="journal article" date="2004" name="Genome Res.">
        <title>The status, quality, and expansion of the NIH full-length cDNA project: the Mammalian Gene Collection (MGC).</title>
        <authorList>
            <consortium name="The MGC Project Team"/>
        </authorList>
    </citation>
    <scope>NUCLEOTIDE SEQUENCE [LARGE SCALE MRNA] (ISOFORMS 1; 2 AND 3)</scope>
    <source>
        <tissue>Eye</tissue>
        <tissue>Muscle</tissue>
        <tissue>Testis</tissue>
    </source>
</reference>
<reference key="8">
    <citation type="journal article" date="2003" name="Nature">
        <title>Proteomic characterization of the human centrosome by protein correlation profiling.</title>
        <authorList>
            <person name="Andersen J.S."/>
            <person name="Wilkinson C.J."/>
            <person name="Mayor T."/>
            <person name="Mortensen P."/>
            <person name="Nigg E.A."/>
            <person name="Mann M."/>
        </authorList>
    </citation>
    <scope>IDENTIFICATION BY MASS SPECTROMETRY</scope>
    <scope>SUBCELLULAR LOCATION [LARGE SCALE ANALYSIS]</scope>
    <source>
        <tissue>Lymphoblast</tissue>
    </source>
</reference>
<reference key="9">
    <citation type="journal article" date="2008" name="Mol. Biol. Cell">
        <title>CDK5RAP2 is a pericentriolar protein that functions in centrosomal attachment of the gamma-tubulin ring complex.</title>
        <authorList>
            <person name="Fong K.W."/>
            <person name="Choi Y.K."/>
            <person name="Rattner J.B."/>
            <person name="Qi R.Z."/>
        </authorList>
    </citation>
    <scope>INTERACTION WITH CDK5RAP2</scope>
</reference>
<reference key="10">
    <citation type="journal article" date="2009" name="Mol. Cell. Proteomics">
        <title>Large-scale proteomics analysis of the human kinome.</title>
        <authorList>
            <person name="Oppermann F.S."/>
            <person name="Gnad F."/>
            <person name="Olsen J.V."/>
            <person name="Hornberger R."/>
            <person name="Greff Z."/>
            <person name="Keri G."/>
            <person name="Mann M."/>
            <person name="Daub H."/>
        </authorList>
    </citation>
    <scope>IDENTIFICATION BY MASS SPECTROMETRY [LARGE SCALE ANALYSIS]</scope>
</reference>
<reference key="11">
    <citation type="journal article" date="2009" name="Sci. Signal.">
        <title>Quantitative phosphoproteomic analysis of T cell receptor signaling reveals system-wide modulation of protein-protein interactions.</title>
        <authorList>
            <person name="Mayya V."/>
            <person name="Lundgren D.H."/>
            <person name="Hwang S.-I."/>
            <person name="Rezaul K."/>
            <person name="Wu L."/>
            <person name="Eng J.K."/>
            <person name="Rodionov V."/>
            <person name="Han D.K."/>
        </authorList>
    </citation>
    <scope>IDENTIFICATION BY MASS SPECTROMETRY [LARGE SCALE ANALYSIS]</scope>
    <source>
        <tissue>Leukemic T-cell</tissue>
    </source>
</reference>
<reference key="12">
    <citation type="journal article" date="2011" name="BMC Syst. Biol.">
        <title>Initial characterization of the human central proteome.</title>
        <authorList>
            <person name="Burkard T.R."/>
            <person name="Planyavsky M."/>
            <person name="Kaupe I."/>
            <person name="Breitwieser F.P."/>
            <person name="Buerckstuemmer T."/>
            <person name="Bennett K.L."/>
            <person name="Superti-Furga G."/>
            <person name="Colinge J."/>
        </authorList>
    </citation>
    <scope>IDENTIFICATION BY MASS SPECTROMETRY [LARGE SCALE ANALYSIS]</scope>
</reference>
<reference key="13">
    <citation type="journal article" date="2012" name="Proc. Natl. Acad. Sci. U.S.A.">
        <title>N-terminal acetylome analyses and functional insights of the N-terminal acetyltransferase NatB.</title>
        <authorList>
            <person name="Van Damme P."/>
            <person name="Lasa M."/>
            <person name="Polevoda B."/>
            <person name="Gazquez C."/>
            <person name="Elosegui-Artola A."/>
            <person name="Kim D.S."/>
            <person name="De Juan-Pardo E."/>
            <person name="Demeyer K."/>
            <person name="Hole K."/>
            <person name="Larrea E."/>
            <person name="Timmerman E."/>
            <person name="Prieto J."/>
            <person name="Arnesen T."/>
            <person name="Sherman F."/>
            <person name="Gevaert K."/>
            <person name="Aldabe R."/>
        </authorList>
    </citation>
    <scope>ACETYLATION [LARGE SCALE ANALYSIS] AT ALA-2</scope>
    <scope>CLEAVAGE OF INITIATOR METHIONINE [LARGE SCALE ANALYSIS]</scope>
    <scope>IDENTIFICATION BY MASS SPECTROMETRY [LARGE SCALE ANALYSIS]</scope>
</reference>
<reference key="14">
    <citation type="journal article" date="2013" name="J. Proteome Res.">
        <title>Toward a comprehensive characterization of a human cancer cell phosphoproteome.</title>
        <authorList>
            <person name="Zhou H."/>
            <person name="Di Palma S."/>
            <person name="Preisinger C."/>
            <person name="Peng M."/>
            <person name="Polat A.N."/>
            <person name="Heck A.J."/>
            <person name="Mohammed S."/>
        </authorList>
    </citation>
    <scope>PHOSPHORYLATION [LARGE SCALE ANALYSIS] AT SER-113</scope>
    <scope>IDENTIFICATION BY MASS SPECTROMETRY [LARGE SCALE ANALYSIS]</scope>
    <source>
        <tissue>Erythroleukemia</tissue>
    </source>
</reference>
<reference key="15">
    <citation type="journal article" date="2015" name="Proteomics">
        <title>N-terminome analysis of the human mitochondrial proteome.</title>
        <authorList>
            <person name="Vaca Jacome A.S."/>
            <person name="Rabilloud T."/>
            <person name="Schaeffer-Reiss C."/>
            <person name="Rompais M."/>
            <person name="Ayoub D."/>
            <person name="Lane L."/>
            <person name="Bairoch A."/>
            <person name="Van Dorsselaer A."/>
            <person name="Carapito C."/>
        </authorList>
    </citation>
    <scope>IDENTIFICATION BY MASS SPECTROMETRY [LARGE SCALE ANALYSIS]</scope>
</reference>
<reference evidence="15" key="16">
    <citation type="journal article" date="2024" name="Dev. Cell">
        <title>CDK5RAP2 activates microtubule nucleator gammaTuRC by facilitating template formation and actin release.</title>
        <authorList>
            <person name="Serna M."/>
            <person name="Zimmermann F."/>
            <person name="Vineethakumari C."/>
            <person name="Gonzalez-Rodriguez N."/>
            <person name="Llorca O."/>
            <person name="Luders J."/>
        </authorList>
    </citation>
    <scope>STRUCTURE BY ELECTRON MICROSCOPY (3.57 ANGSTROMS) OF THE GAMMA-TUBULIN RING COMPLEX IN COMPLEX WITH MZT1; MZT2A; CDK5RAP2 AND ACTB</scope>
    <scope>FUNCTION</scope>
    <scope>SUBUNIT</scope>
</reference>
<reference evidence="16 17 18" key="17">
    <citation type="journal article" date="2024" name="Nat. Struct. Mol. Biol.">
        <title>Structure of the gamma-tubulin ring complex-capped microtubule.</title>
        <authorList>
            <person name="Aher A."/>
            <person name="Urnavicius L."/>
            <person name="Xue A."/>
            <person name="Neselu K."/>
            <person name="Kapoor T.M."/>
        </authorList>
    </citation>
    <scope>STRUCTURE BY ELECTRON MICROSCOPY (7.00 ANGSTROMS) OF THE GAMMA-TUBULIN RING COMPLEX IN COMPLEX WITH MZT1; ACTB; TUBA1B AND TUBB3</scope>
    <scope>FUNCTION</scope>
    <scope>SUBUNIT</scope>
</reference>
<reference evidence="14" key="18">
    <citation type="journal article" date="2024" name="Science">
        <title>Transition of human gamma-tubulin ring complex into a closed conformation during microtubule nucleation.</title>
        <authorList>
            <person name="Brito C."/>
            <person name="Serna M."/>
            <person name="Guerra P."/>
            <person name="Llorca O."/>
            <person name="Surrey T."/>
        </authorList>
    </citation>
    <scope>STRUCTURE BY ELECTRON MICROSCOPY (3.72 ANGSTROMS) OF THE GAMMA-TUBULIN RING COMPLEX</scope>
    <scope>FUNCTION</scope>
    <scope>SUBUNIT</scope>
</reference>
<sequence length="907" mass="103571">MATPDQKSPNVLLQNLCCRILGRSEADVAQQFQYAVRVIGSNFAPTVERDEFLVAEKIKKELIRQRREADAALFSELHRKLHSQGVLKNKWSILYLLLSLSEDPRRQPSKVSSYATLFAQALPRDAHSTPYYYARPQTLPLSYQDRSAQSAQSSGSVGSSGISSIGLCALSGPAPAPQSLLPGQSNQAPGVGDCLRQQLGSRLAWTLTANQPSSQATTSKGVPSAVSRNMTRSRREGDTGGTMEITEAALVRDILYVFQGIDGKNIKMNNTENCYKVEGKANLSRSLRDTAVRLSELGWLHNKIRRYTDQRSLDRSFGLVGQSFCAALHQELREYYRLLSVLHSQLQLEDDQGVNLGLESSLTLRRLLVWTYDPKIRLKTLAALVDHCQGRKGGELASAVHAYTKTGDPYMRSLVQHILSLVSHPVLSFLYRWIYDGELEDTYHEFFVASDPTVKTDRLWHDKYTLRKSMIPSFMTMDQSRKVLLIGKSINFLHQVCHDQTPTTKMIAVTKSAESPQDAADLFTDLENAFQGKIDAAYFETSKYLLDVLNKKYSLLDHMQAMRRYLLLGQGDFIRHLMDLLKPELVRPATTLYQHNLTGILETAVRATNAQFDSPEILRRLDVRLLEVSPGDTGWDVFSLDYHVDGPIATVFTRECMSHYLRVFNFLWRAKRMEYILTDIRKGHMCNAKLLRNMPEFSGVLHQCHILASEMVHFIHQMQYYITFEVLECSWDELWNKVQQAQDLDHIIAAHEVFLDTIISRCLLDSDSRALLNQLRAVFDQIIELQNAQDAIYRAALEELQRRLQFEEKKKQREIEGQWGVTAAEEEEENKRIGEFKESIPKMCSQLRILTHFYQGIVQQFLVLLTTSSDESLRFLSFRLDFNEHYKAREPRLRVSLGTRGRRSSHT</sequence>
<proteinExistence type="evidence at protein level"/>
<name>GCP3_HUMAN</name>
<organism>
    <name type="scientific">Homo sapiens</name>
    <name type="common">Human</name>
    <dbReference type="NCBI Taxonomy" id="9606"/>
    <lineage>
        <taxon>Eukaryota</taxon>
        <taxon>Metazoa</taxon>
        <taxon>Chordata</taxon>
        <taxon>Craniata</taxon>
        <taxon>Vertebrata</taxon>
        <taxon>Euteleostomi</taxon>
        <taxon>Mammalia</taxon>
        <taxon>Eutheria</taxon>
        <taxon>Euarchontoglires</taxon>
        <taxon>Primates</taxon>
        <taxon>Haplorrhini</taxon>
        <taxon>Catarrhini</taxon>
        <taxon>Hominidae</taxon>
        <taxon>Homo</taxon>
    </lineage>
</organism>
<feature type="initiator methionine" description="Removed" evidence="19">
    <location>
        <position position="1"/>
    </location>
</feature>
<feature type="chain" id="PRO_0000078118" description="Gamma-tubulin complex component 3">
    <location>
        <begin position="2"/>
        <end position="907"/>
    </location>
</feature>
<feature type="region of interest" description="Disordered" evidence="2">
    <location>
        <begin position="210"/>
        <end position="241"/>
    </location>
</feature>
<feature type="compositionally biased region" description="Polar residues" evidence="2">
    <location>
        <begin position="210"/>
        <end position="230"/>
    </location>
</feature>
<feature type="modified residue" description="N-acetylalanine" evidence="19">
    <location>
        <position position="2"/>
    </location>
</feature>
<feature type="modified residue" description="Phosphoserine" evidence="20">
    <location>
        <position position="113"/>
    </location>
</feature>
<feature type="splice variant" id="VSP_001622" description="In isoform 3." evidence="10">
    <original>RKGGELASAVHAYTKTGDPYMRSLVQHILSLVSHPVLSFLYRWI</original>
    <variation>PTRVFPTHVFPTRDFPTRDFPMHVFPTRVFPTRVWHSLCFRTRL</variation>
    <location>
        <begin position="391"/>
        <end position="434"/>
    </location>
</feature>
<feature type="splice variant" id="VSP_001623" description="In isoform 3." evidence="10">
    <location>
        <begin position="435"/>
        <end position="907"/>
    </location>
</feature>
<feature type="splice variant" id="VSP_001620" description="In isoform 2." evidence="10 11 12">
    <original>GQWGVTAA</original>
    <variation>VEMCLYCV</variation>
    <location>
        <begin position="817"/>
        <end position="824"/>
    </location>
</feature>
<feature type="splice variant" id="VSP_001621" description="In isoform 2." evidence="10 11 12">
    <location>
        <begin position="825"/>
        <end position="907"/>
    </location>
</feature>
<feature type="sequence variant" id="VAR_049251" description="In dbSNP:rs1044287." evidence="9">
    <original>T</original>
    <variation>S</variation>
    <location>
        <position position="208"/>
    </location>
</feature>
<feature type="sequence conflict" description="In Ref. 2; CAA05832/CAA05833." evidence="13" ref="2">
    <original>S</original>
    <variation>I</variation>
    <location>
        <position position="361"/>
    </location>
</feature>
<comment type="function">
    <text evidence="5 6 7 8">Component of the gamma-tubulin ring complex (gTuRC) which mediates microtubule nucleation (PubMed:38305685, PubMed:38609661, PubMed:39321809, PubMed:9566967). The gTuRC regulates the minus-end nucleation of alpha-beta tubulin heterodimers that grow into microtubule protafilaments, a critical step in centrosome duplication and spindle formation (PubMed:38305685, PubMed:38609661, PubMed:39321809).</text>
</comment>
<comment type="subunit">
    <text evidence="1 4 5 6 7">Component of the gamma-tubulin ring complex (gTuRC) consisting of TUBGCP2, TUBGCP3, TUBGCP4, TUBGCP5 and TUBGCP6 and gamma-tubulin TUBG1 or TUBG2 (PubMed:39321809, PubMed:38609661, PubMed:38305685). TUBGCP2, TUBGCP3, TUBGCP4, TUBGCP5 and TUBGCP6 assemble in a 5:5:2:1:1 stoichiometry; each is associated with a gamma-tubulin, thereby arranging 14 gamma-tubulins in a helical manner (PubMed:39321809, PubMed:38609661, PubMed:38305685). Gamma-tubulin at the first position is blocked by TUBGCP3 at the last position, allowing 13 protafilaments to grow into a microtubule (PubMed:39321809, PubMed:38609661, PubMed:38305685). The gTuRC (via TUBGCP3 and TUBGCP6) interacts with ACTB and MZT1; the interactions form a luminal bridge that stabilizes the initial structure during complex assembly (PubMed:39321809, PubMed:38609661). The gTuRC (via TUBGCP2) interacts with MZT2A/MZT2B and CDK5RAP2 (via CM1 motif); the interactions play a role in gTuRC activation (PubMed:39321809). Interacts with NIN (via N-terminus); the interaction may promote recruitment of the gamma-tubulin ring complex to the centrosome (By similarity).</text>
</comment>
<comment type="subcellular location">
    <subcellularLocation>
        <location evidence="3">Cytoplasm</location>
        <location evidence="3">Cytoskeleton</location>
        <location evidence="3">Microtubule organizing center</location>
        <location evidence="3">Centrosome</location>
    </subcellularLocation>
</comment>
<comment type="alternative products">
    <event type="alternative splicing"/>
    <isoform>
        <id>Q96CW5-1</id>
        <name>1</name>
        <sequence type="displayed"/>
    </isoform>
    <isoform>
        <id>Q96CW5-2</id>
        <name>2</name>
        <sequence type="described" ref="VSP_001620 VSP_001621"/>
    </isoform>
    <isoform>
        <id>Q96CW5-3</id>
        <name>3</name>
        <sequence type="described" ref="VSP_001622 VSP_001623"/>
    </isoform>
    <text>Experimental confirmation may be lacking for some isoforms.</text>
</comment>
<comment type="tissue specificity">
    <text>Ubiquitously expressed.</text>
</comment>
<comment type="similarity">
    <text evidence="13">Belongs to the TUBGCP family.</text>
</comment>
<accession>Q96CW5</accession>
<accession>O43631</accession>
<accession>O60852</accession>
<accession>O60853</accession>
<accession>Q5T8L2</accession>
<accession>Q7Z4K1</accession>
<accession>Q96I79</accession>
<keyword id="KW-0002">3D-structure</keyword>
<keyword id="KW-0007">Acetylation</keyword>
<keyword id="KW-0025">Alternative splicing</keyword>
<keyword id="KW-0963">Cytoplasm</keyword>
<keyword id="KW-0206">Cytoskeleton</keyword>
<keyword id="KW-0493">Microtubule</keyword>
<keyword id="KW-0597">Phosphoprotein</keyword>
<keyword id="KW-1267">Proteomics identification</keyword>
<keyword id="KW-1185">Reference proteome</keyword>